<proteinExistence type="evidence at transcript level"/>
<sequence>MSSKCDVVVVGGGISGMAAAKLLHDSGLNVIVLEARDRVGGRTYTVRNQQVKYVDLGGSYVGPTQNRILRLSKELGLETYKVNEVERLIHYVKGKSYPFRGPLPPVRNPITFLDLNNLWRTVDDMGREIPSDAPWKAPLAEQWDQMTMKELLDKLCWTESSKQLATLFVNLCVTAETHEVSALWFLWYVKQCGGTTRIISTTNGGQERKFVGGSGQVTERIKDLLGDRVKLERPVVHIDQTGENVLVETLNHEVYEAKYVISAIPPVLGMKIHFSPPLPMMRNQLITRVPLGSVIKCIVYYKEPFWRHKDYCGSMIIEGEEAPIAYTLDDSKPDGSCAAIIGFILAHKARKLARLTKEERLKKLCDLYAKVLGSKEALNPVHYEEKNWCEEQYSAGCYTTYFPPGIMTQYGRVLRQPVGRIYFAGTETATHWSGYMEGAVEAGERAAREILHAMGKIPEDEIWQSEPESVDVPAKPITTTFLERHLPSVPGLLRLIGLTAIFSATALGYLAHKRGLLVRV</sequence>
<dbReference type="EC" id="1.4.3.21" evidence="3"/>
<dbReference type="EC" id="1.4.3.4" evidence="3"/>
<dbReference type="EMBL" id="AY596820">
    <property type="protein sequence ID" value="AAT06259.1"/>
    <property type="molecule type" value="mRNA"/>
</dbReference>
<dbReference type="RefSeq" id="NP_001001864.1">
    <property type="nucleotide sequence ID" value="NM_001001864.1"/>
</dbReference>
<dbReference type="SMR" id="Q6PLK3"/>
<dbReference type="FunCoup" id="Q6PLK3">
    <property type="interactions" value="243"/>
</dbReference>
<dbReference type="STRING" id="9823.ENSSSCP00000022462"/>
<dbReference type="PaxDb" id="9823-ENSSSCP00000028353"/>
<dbReference type="PeptideAtlas" id="Q6PLK3"/>
<dbReference type="GeneID" id="414909"/>
<dbReference type="KEGG" id="ssc:414909"/>
<dbReference type="CTD" id="4129"/>
<dbReference type="eggNOG" id="KOG0029">
    <property type="taxonomic scope" value="Eukaryota"/>
</dbReference>
<dbReference type="InParanoid" id="Q6PLK3"/>
<dbReference type="OrthoDB" id="7777654at2759"/>
<dbReference type="Proteomes" id="UP000008227">
    <property type="component" value="Unplaced"/>
</dbReference>
<dbReference type="Proteomes" id="UP000314985">
    <property type="component" value="Unplaced"/>
</dbReference>
<dbReference type="Proteomes" id="UP000694570">
    <property type="component" value="Unplaced"/>
</dbReference>
<dbReference type="Proteomes" id="UP000694571">
    <property type="component" value="Unplaced"/>
</dbReference>
<dbReference type="Proteomes" id="UP000694720">
    <property type="component" value="Unplaced"/>
</dbReference>
<dbReference type="Proteomes" id="UP000694722">
    <property type="component" value="Unplaced"/>
</dbReference>
<dbReference type="Proteomes" id="UP000694723">
    <property type="component" value="Unplaced"/>
</dbReference>
<dbReference type="Proteomes" id="UP000694724">
    <property type="component" value="Unplaced"/>
</dbReference>
<dbReference type="Proteomes" id="UP000694725">
    <property type="component" value="Unplaced"/>
</dbReference>
<dbReference type="Proteomes" id="UP000694726">
    <property type="component" value="Unplaced"/>
</dbReference>
<dbReference type="Proteomes" id="UP000694727">
    <property type="component" value="Unplaced"/>
</dbReference>
<dbReference type="Proteomes" id="UP000694728">
    <property type="component" value="Unplaced"/>
</dbReference>
<dbReference type="GO" id="GO:0005741">
    <property type="term" value="C:mitochondrial outer membrane"/>
    <property type="evidence" value="ECO:0007669"/>
    <property type="project" value="UniProtKB-SubCell"/>
</dbReference>
<dbReference type="GO" id="GO:0005739">
    <property type="term" value="C:mitochondrion"/>
    <property type="evidence" value="ECO:0000250"/>
    <property type="project" value="UniProtKB"/>
</dbReference>
<dbReference type="GO" id="GO:0050660">
    <property type="term" value="F:flavin adenine dinucleotide binding"/>
    <property type="evidence" value="ECO:0000318"/>
    <property type="project" value="GO_Central"/>
</dbReference>
<dbReference type="GO" id="GO:0097621">
    <property type="term" value="F:monoamine oxidase activity"/>
    <property type="evidence" value="ECO:0000250"/>
    <property type="project" value="UniProtKB"/>
</dbReference>
<dbReference type="GO" id="GO:0008131">
    <property type="term" value="F:primary methylamine oxidase activity"/>
    <property type="evidence" value="ECO:0000250"/>
    <property type="project" value="UniProtKB"/>
</dbReference>
<dbReference type="FunFam" id="1.10.405.10:FF:000005">
    <property type="entry name" value="Amine oxidase [flavin-containing]"/>
    <property type="match status" value="1"/>
</dbReference>
<dbReference type="Gene3D" id="3.90.660.10">
    <property type="match status" value="1"/>
</dbReference>
<dbReference type="Gene3D" id="6.10.250.130">
    <property type="match status" value="1"/>
</dbReference>
<dbReference type="Gene3D" id="3.50.50.60">
    <property type="entry name" value="FAD/NAD(P)-binding domain"/>
    <property type="match status" value="1"/>
</dbReference>
<dbReference type="Gene3D" id="1.10.405.10">
    <property type="entry name" value="Guanine Nucleotide Dissociation Inhibitor, domain 1"/>
    <property type="match status" value="1"/>
</dbReference>
<dbReference type="InterPro" id="IPR002937">
    <property type="entry name" value="Amino_oxidase"/>
</dbReference>
<dbReference type="InterPro" id="IPR036188">
    <property type="entry name" value="FAD/NAD-bd_sf"/>
</dbReference>
<dbReference type="InterPro" id="IPR001613">
    <property type="entry name" value="Flavin_amine_oxidase"/>
</dbReference>
<dbReference type="InterPro" id="IPR050703">
    <property type="entry name" value="Flavin_MAO"/>
</dbReference>
<dbReference type="PANTHER" id="PTHR43563">
    <property type="entry name" value="AMINE OXIDASE"/>
    <property type="match status" value="1"/>
</dbReference>
<dbReference type="PANTHER" id="PTHR43563:SF1">
    <property type="entry name" value="AMINE OXIDASE [FLAVIN-CONTAINING] B"/>
    <property type="match status" value="1"/>
</dbReference>
<dbReference type="Pfam" id="PF01593">
    <property type="entry name" value="Amino_oxidase"/>
    <property type="match status" value="1"/>
</dbReference>
<dbReference type="PRINTS" id="PR00757">
    <property type="entry name" value="AMINEOXDASEF"/>
</dbReference>
<dbReference type="SUPFAM" id="SSF54373">
    <property type="entry name" value="FAD-linked reductases, C-terminal domain"/>
    <property type="match status" value="1"/>
</dbReference>
<dbReference type="SUPFAM" id="SSF51905">
    <property type="entry name" value="FAD/NAD(P)-binding domain"/>
    <property type="match status" value="1"/>
</dbReference>
<keyword id="KW-0007">Acetylation</keyword>
<keyword id="KW-0274">FAD</keyword>
<keyword id="KW-0285">Flavoprotein</keyword>
<keyword id="KW-0472">Membrane</keyword>
<keyword id="KW-0496">Mitochondrion</keyword>
<keyword id="KW-1000">Mitochondrion outer membrane</keyword>
<keyword id="KW-0560">Oxidoreductase</keyword>
<keyword id="KW-1185">Reference proteome</keyword>
<keyword id="KW-0812">Transmembrane</keyword>
<keyword id="KW-1133">Transmembrane helix</keyword>
<comment type="function">
    <text evidence="3">Catalyzes the oxidative deamination of primary and some secondary amines such as neurotransmitters, and exogenous amines including the tertiary amine, neurotoxin 1-methyl-4-phenyl-1,2,3,6-tetrahydropyridine (MPTP), with concomitant reduction of oxygen to hydrogen peroxide and participates in the metabolism of neuroactive and vasoactive amines in the central nervous system and peripheral tissues. Preferentially degrades benzylamine and phenylethylamine.</text>
</comment>
<comment type="catalytic activity">
    <reaction evidence="3">
        <text>a secondary aliphatic amine + O2 + H2O = a primary amine + an aldehyde + H2O2</text>
        <dbReference type="Rhea" id="RHEA:26414"/>
        <dbReference type="ChEBI" id="CHEBI:15377"/>
        <dbReference type="ChEBI" id="CHEBI:15379"/>
        <dbReference type="ChEBI" id="CHEBI:16240"/>
        <dbReference type="ChEBI" id="CHEBI:17478"/>
        <dbReference type="ChEBI" id="CHEBI:58855"/>
        <dbReference type="ChEBI" id="CHEBI:65296"/>
        <dbReference type="EC" id="1.4.3.4"/>
    </reaction>
</comment>
<comment type="catalytic activity">
    <reaction evidence="3">
        <text>(R)-adrenaline + O2 + H2O = (R)-3,4-dihydroxymandelaldehyde + methylamine + H2O2</text>
        <dbReference type="Rhea" id="RHEA:51168"/>
        <dbReference type="ChEBI" id="CHEBI:15377"/>
        <dbReference type="ChEBI" id="CHEBI:15379"/>
        <dbReference type="ChEBI" id="CHEBI:16240"/>
        <dbReference type="ChEBI" id="CHEBI:59338"/>
        <dbReference type="ChEBI" id="CHEBI:71406"/>
        <dbReference type="ChEBI" id="CHEBI:180943"/>
    </reaction>
</comment>
<comment type="catalytic activity">
    <reaction evidence="3">
        <text>a primary methyl amine + O2 + H2O = an aldehyde + H2O2 + NH4(+)</text>
        <dbReference type="Rhea" id="RHEA:16153"/>
        <dbReference type="ChEBI" id="CHEBI:15377"/>
        <dbReference type="ChEBI" id="CHEBI:15379"/>
        <dbReference type="ChEBI" id="CHEBI:16240"/>
        <dbReference type="ChEBI" id="CHEBI:17478"/>
        <dbReference type="ChEBI" id="CHEBI:28938"/>
        <dbReference type="ChEBI" id="CHEBI:228804"/>
        <dbReference type="EC" id="1.4.3.21"/>
    </reaction>
</comment>
<comment type="catalytic activity">
    <reaction evidence="3">
        <text>benzylamine + O2 + H2O = benzaldehyde + H2O2 + NH4(+)</text>
        <dbReference type="Rhea" id="RHEA:59424"/>
        <dbReference type="ChEBI" id="CHEBI:15377"/>
        <dbReference type="ChEBI" id="CHEBI:15379"/>
        <dbReference type="ChEBI" id="CHEBI:16240"/>
        <dbReference type="ChEBI" id="CHEBI:17169"/>
        <dbReference type="ChEBI" id="CHEBI:28938"/>
        <dbReference type="ChEBI" id="CHEBI:225238"/>
    </reaction>
    <physiologicalReaction direction="left-to-right" evidence="3">
        <dbReference type="Rhea" id="RHEA:59425"/>
    </physiologicalReaction>
</comment>
<comment type="catalytic activity">
    <reaction evidence="3">
        <text>dopamine + O2 + H2O = 3,4-dihydroxyphenylacetaldehyde + H2O2 + NH4(+)</text>
        <dbReference type="Rhea" id="RHEA:27946"/>
        <dbReference type="ChEBI" id="CHEBI:15377"/>
        <dbReference type="ChEBI" id="CHEBI:15379"/>
        <dbReference type="ChEBI" id="CHEBI:16240"/>
        <dbReference type="ChEBI" id="CHEBI:27978"/>
        <dbReference type="ChEBI" id="CHEBI:28938"/>
        <dbReference type="ChEBI" id="CHEBI:59905"/>
    </reaction>
</comment>
<comment type="catalytic activity">
    <reaction evidence="3">
        <text>tyramine + O2 + H2O = (4-hydroxyphenyl)acetaldehyde + H2O2 + NH4(+)</text>
        <dbReference type="Rhea" id="RHEA:30591"/>
        <dbReference type="ChEBI" id="CHEBI:15377"/>
        <dbReference type="ChEBI" id="CHEBI:15379"/>
        <dbReference type="ChEBI" id="CHEBI:15621"/>
        <dbReference type="ChEBI" id="CHEBI:16240"/>
        <dbReference type="ChEBI" id="CHEBI:28938"/>
        <dbReference type="ChEBI" id="CHEBI:327995"/>
    </reaction>
</comment>
<comment type="catalytic activity">
    <reaction evidence="3">
        <text>(R)-noradrenaline + O2 + H2O = (R)-3,4-dihydroxymandelaldehyde + H2O2 + NH4(+)</text>
        <dbReference type="Rhea" id="RHEA:69076"/>
        <dbReference type="ChEBI" id="CHEBI:15377"/>
        <dbReference type="ChEBI" id="CHEBI:15379"/>
        <dbReference type="ChEBI" id="CHEBI:16240"/>
        <dbReference type="ChEBI" id="CHEBI:28938"/>
        <dbReference type="ChEBI" id="CHEBI:72587"/>
        <dbReference type="ChEBI" id="CHEBI:180943"/>
    </reaction>
</comment>
<comment type="catalytic activity">
    <reaction evidence="3">
        <text>2-phenylethylamine + O2 + H2O = 2-phenylacetaldehyde + H2O2 + NH4(+)</text>
        <dbReference type="Rhea" id="RHEA:25265"/>
        <dbReference type="ChEBI" id="CHEBI:15377"/>
        <dbReference type="ChEBI" id="CHEBI:15379"/>
        <dbReference type="ChEBI" id="CHEBI:16240"/>
        <dbReference type="ChEBI" id="CHEBI:16424"/>
        <dbReference type="ChEBI" id="CHEBI:28938"/>
        <dbReference type="ChEBI" id="CHEBI:225237"/>
    </reaction>
</comment>
<comment type="catalytic activity">
    <reaction evidence="2">
        <text>N-acetylputrescine + O2 + H2O = 4-acetamidobutanal + H2O2 + NH4(+)</text>
        <dbReference type="Rhea" id="RHEA:70283"/>
        <dbReference type="ChEBI" id="CHEBI:7386"/>
        <dbReference type="ChEBI" id="CHEBI:15377"/>
        <dbReference type="ChEBI" id="CHEBI:15379"/>
        <dbReference type="ChEBI" id="CHEBI:16240"/>
        <dbReference type="ChEBI" id="CHEBI:28938"/>
        <dbReference type="ChEBI" id="CHEBI:58263"/>
    </reaction>
    <physiologicalReaction direction="left-to-right" evidence="2">
        <dbReference type="Rhea" id="RHEA:70284"/>
    </physiologicalReaction>
</comment>
<comment type="cofactor">
    <cofactor evidence="3">
        <name>FAD</name>
        <dbReference type="ChEBI" id="CHEBI:57692"/>
    </cofactor>
</comment>
<comment type="subunit">
    <text evidence="1">Monomer, homo- or heterodimer (containing two subunits of similar size). Each subunit contains a covalently bound flavin. Enzymatically active as monomer (By similarity).</text>
</comment>
<comment type="subcellular location">
    <subcellularLocation>
        <location evidence="1">Mitochondrion outer membrane</location>
        <topology evidence="1">Single-pass type IV membrane protein</topology>
        <orientation evidence="1">Cytoplasmic side</orientation>
    </subcellularLocation>
</comment>
<comment type="similarity">
    <text evidence="6">Belongs to the flavin monoamine oxidase family.</text>
</comment>
<protein>
    <recommendedName>
        <fullName evidence="3">Amine oxidase [flavin-containing] B</fullName>
        <ecNumber evidence="3">1.4.3.21</ecNumber>
        <ecNumber evidence="3">1.4.3.4</ecNumber>
    </recommendedName>
    <alternativeName>
        <fullName>Monoamine oxidase type B</fullName>
        <shortName>MAO-B</shortName>
    </alternativeName>
</protein>
<feature type="initiator methionine" description="Removed" evidence="4">
    <location>
        <position position="1"/>
    </location>
</feature>
<feature type="chain" id="PRO_0000099861" description="Amine oxidase [flavin-containing] B">
    <location>
        <begin position="2"/>
        <end position="520"/>
    </location>
</feature>
<feature type="topological domain" description="Cytoplasmic" evidence="1">
    <location>
        <begin position="2"/>
        <end position="489"/>
    </location>
</feature>
<feature type="transmembrane region" description="Helical; Anchor for type IV membrane protein" evidence="1">
    <location>
        <begin position="490"/>
        <end position="516"/>
    </location>
</feature>
<feature type="topological domain" description="Mitochondrial intermembrane" evidence="1">
    <location>
        <begin position="517"/>
        <end position="520"/>
    </location>
</feature>
<feature type="site" description="Important for catalytic activity" evidence="1">
    <location>
        <position position="156"/>
    </location>
</feature>
<feature type="site" description="Important for catalytic activity" evidence="1">
    <location>
        <position position="365"/>
    </location>
</feature>
<feature type="site" description="Important for catalytic activity" evidence="1">
    <location>
        <position position="382"/>
    </location>
</feature>
<feature type="modified residue" description="N-acetylserine" evidence="4">
    <location>
        <position position="2"/>
    </location>
</feature>
<feature type="modified residue" description="N6-acetyllysine" evidence="5">
    <location>
        <position position="52"/>
    </location>
</feature>
<feature type="modified residue" description="S-8alpha-FAD cysteine" evidence="3">
    <location>
        <position position="397"/>
    </location>
</feature>
<evidence type="ECO:0000250" key="1"/>
<evidence type="ECO:0000250" key="2">
    <source>
        <dbReference type="UniProtKB" id="P19643"/>
    </source>
</evidence>
<evidence type="ECO:0000250" key="3">
    <source>
        <dbReference type="UniProtKB" id="P27338"/>
    </source>
</evidence>
<evidence type="ECO:0000250" key="4">
    <source>
        <dbReference type="UniProtKB" id="P56560"/>
    </source>
</evidence>
<evidence type="ECO:0000250" key="5">
    <source>
        <dbReference type="UniProtKB" id="Q8BW75"/>
    </source>
</evidence>
<evidence type="ECO:0000305" key="6"/>
<gene>
    <name evidence="3" type="primary">MAOB</name>
</gene>
<name>AOFB_PIG</name>
<organism>
    <name type="scientific">Sus scrofa</name>
    <name type="common">Pig</name>
    <dbReference type="NCBI Taxonomy" id="9823"/>
    <lineage>
        <taxon>Eukaryota</taxon>
        <taxon>Metazoa</taxon>
        <taxon>Chordata</taxon>
        <taxon>Craniata</taxon>
        <taxon>Vertebrata</taxon>
        <taxon>Euteleostomi</taxon>
        <taxon>Mammalia</taxon>
        <taxon>Eutheria</taxon>
        <taxon>Laurasiatheria</taxon>
        <taxon>Artiodactyla</taxon>
        <taxon>Suina</taxon>
        <taxon>Suidae</taxon>
        <taxon>Sus</taxon>
    </lineage>
</organism>
<reference key="1">
    <citation type="submission" date="2004-04" db="EMBL/GenBank/DDBJ databases">
        <title>Cloning of the porcine MAO-A and -B gene.</title>
        <authorList>
            <person name="Bai C.Y."/>
            <person name="Zhao W."/>
            <person name="Meng H."/>
            <person name="Pan Y.C."/>
        </authorList>
    </citation>
    <scope>NUCLEOTIDE SEQUENCE [MRNA]</scope>
</reference>
<accession>Q6PLK3</accession>